<accession>A5G126</accession>
<proteinExistence type="inferred from homology"/>
<sequence length="595" mass="64858">MHEYRTHDCGALRAADAGITARLSGWVNVKRDHGGLLFIDLRDHYGITQCVFPAGSPVFAAAEALRAESVITVTGRVVKRDADTVNPRLPTGEIELVAETVEVQSTADVLPIQVAGEAQFPEELRLRYRFLDLRREKLHRNIMLRANVIAWLRREMTARGFTEFTTPILTASSPEGARDFLVPSRVHPGQFYALPQAPQQFKQLLMVAGFDRYFQIAPCFRDEASRADRAPGEFYQLDFEMSFVTQEDVFATIEPVLGGLFREFGGGRGVTQWPFPRIAYDEALLKYGSDKPDLRNPLLITDVTEAFRDSGFGLFAKIVAGGGVVRAIPAPGTGGNPRSFFDKLNDWARSEGAGGLGYIIFAPDGAKGPIAKNLEPARAEAIREATGASVGDAVFFAAGKPLEAAKFAGTVRTKLGTDLGLIDGAKFEFCWIVDFPMYERDEETGQIVFSHNPFSMPQGGLEALNGQDPLTIKAFQYDIVCNGVELSSGAIRNHRPDIMLRAFEIAGYGAEEVEARFGGMLNAFRYGAPPHGGSAPGVDRMVMLLADEPNLREVIAFPLNQQGQDLLMGAPAPVPAARLKELSLAIALPPAPKKG</sequence>
<evidence type="ECO:0000255" key="1">
    <source>
        <dbReference type="HAMAP-Rule" id="MF_00044"/>
    </source>
</evidence>
<name>SYDND_ACICJ</name>
<comment type="function">
    <text evidence="1">Aspartyl-tRNA synthetase with relaxed tRNA specificity since it is able to aspartylate not only its cognate tRNA(Asp) but also tRNA(Asn). Reaction proceeds in two steps: L-aspartate is first activated by ATP to form Asp-AMP and then transferred to the acceptor end of tRNA(Asp/Asn).</text>
</comment>
<comment type="catalytic activity">
    <reaction evidence="1">
        <text>tRNA(Asx) + L-aspartate + ATP = L-aspartyl-tRNA(Asx) + AMP + diphosphate</text>
        <dbReference type="Rhea" id="RHEA:18349"/>
        <dbReference type="Rhea" id="RHEA-COMP:9710"/>
        <dbReference type="Rhea" id="RHEA-COMP:9711"/>
        <dbReference type="ChEBI" id="CHEBI:29991"/>
        <dbReference type="ChEBI" id="CHEBI:30616"/>
        <dbReference type="ChEBI" id="CHEBI:33019"/>
        <dbReference type="ChEBI" id="CHEBI:78442"/>
        <dbReference type="ChEBI" id="CHEBI:78516"/>
        <dbReference type="ChEBI" id="CHEBI:456215"/>
        <dbReference type="EC" id="6.1.1.23"/>
    </reaction>
</comment>
<comment type="subunit">
    <text evidence="1">Homodimer.</text>
</comment>
<comment type="subcellular location">
    <subcellularLocation>
        <location evidence="1">Cytoplasm</location>
    </subcellularLocation>
</comment>
<comment type="similarity">
    <text evidence="1">Belongs to the class-II aminoacyl-tRNA synthetase family. Type 1 subfamily.</text>
</comment>
<protein>
    <recommendedName>
        <fullName evidence="1">Aspartate--tRNA(Asp/Asn) ligase</fullName>
        <ecNumber evidence="1">6.1.1.23</ecNumber>
    </recommendedName>
    <alternativeName>
        <fullName evidence="1">Aspartyl-tRNA synthetase</fullName>
        <shortName evidence="1">AspRS</shortName>
    </alternativeName>
    <alternativeName>
        <fullName evidence="1">Non-discriminating aspartyl-tRNA synthetase</fullName>
        <shortName evidence="1">ND-AspRS</shortName>
    </alternativeName>
</protein>
<feature type="chain" id="PRO_1000006626" description="Aspartate--tRNA(Asp/Asn) ligase">
    <location>
        <begin position="1"/>
        <end position="595"/>
    </location>
</feature>
<feature type="region of interest" description="Aspartate" evidence="1">
    <location>
        <begin position="199"/>
        <end position="202"/>
    </location>
</feature>
<feature type="binding site" evidence="1">
    <location>
        <position position="175"/>
    </location>
    <ligand>
        <name>L-aspartate</name>
        <dbReference type="ChEBI" id="CHEBI:29991"/>
    </ligand>
</feature>
<feature type="binding site" evidence="1">
    <location>
        <begin position="221"/>
        <end position="223"/>
    </location>
    <ligand>
        <name>ATP</name>
        <dbReference type="ChEBI" id="CHEBI:30616"/>
    </ligand>
</feature>
<feature type="binding site" evidence="1">
    <location>
        <position position="221"/>
    </location>
    <ligand>
        <name>L-aspartate</name>
        <dbReference type="ChEBI" id="CHEBI:29991"/>
    </ligand>
</feature>
<feature type="binding site" evidence="1">
    <location>
        <position position="451"/>
    </location>
    <ligand>
        <name>L-aspartate</name>
        <dbReference type="ChEBI" id="CHEBI:29991"/>
    </ligand>
</feature>
<feature type="binding site" evidence="1">
    <location>
        <position position="485"/>
    </location>
    <ligand>
        <name>ATP</name>
        <dbReference type="ChEBI" id="CHEBI:30616"/>
    </ligand>
</feature>
<feature type="binding site" evidence="1">
    <location>
        <position position="492"/>
    </location>
    <ligand>
        <name>L-aspartate</name>
        <dbReference type="ChEBI" id="CHEBI:29991"/>
    </ligand>
</feature>
<feature type="binding site" evidence="1">
    <location>
        <begin position="537"/>
        <end position="540"/>
    </location>
    <ligand>
        <name>ATP</name>
        <dbReference type="ChEBI" id="CHEBI:30616"/>
    </ligand>
</feature>
<feature type="site" description="Important for tRNA non-discrimination" evidence="1">
    <location>
        <position position="33"/>
    </location>
</feature>
<reference key="1">
    <citation type="submission" date="2007-05" db="EMBL/GenBank/DDBJ databases">
        <title>Complete sequence of chromosome of Acidiphilium cryptum JF-5.</title>
        <authorList>
            <consortium name="US DOE Joint Genome Institute"/>
            <person name="Copeland A."/>
            <person name="Lucas S."/>
            <person name="Lapidus A."/>
            <person name="Barry K."/>
            <person name="Detter J.C."/>
            <person name="Glavina del Rio T."/>
            <person name="Hammon N."/>
            <person name="Israni S."/>
            <person name="Dalin E."/>
            <person name="Tice H."/>
            <person name="Pitluck S."/>
            <person name="Sims D."/>
            <person name="Brettin T."/>
            <person name="Bruce D."/>
            <person name="Han C."/>
            <person name="Schmutz J."/>
            <person name="Larimer F."/>
            <person name="Land M."/>
            <person name="Hauser L."/>
            <person name="Kyrpides N."/>
            <person name="Kim E."/>
            <person name="Magnuson T."/>
            <person name="Richardson P."/>
        </authorList>
    </citation>
    <scope>NUCLEOTIDE SEQUENCE [LARGE SCALE GENOMIC DNA]</scope>
    <source>
        <strain>JF-5</strain>
    </source>
</reference>
<keyword id="KW-0030">Aminoacyl-tRNA synthetase</keyword>
<keyword id="KW-0067">ATP-binding</keyword>
<keyword id="KW-0963">Cytoplasm</keyword>
<keyword id="KW-0436">Ligase</keyword>
<keyword id="KW-0547">Nucleotide-binding</keyword>
<keyword id="KW-0648">Protein biosynthesis</keyword>
<keyword id="KW-1185">Reference proteome</keyword>
<organism>
    <name type="scientific">Acidiphilium cryptum (strain JF-5)</name>
    <dbReference type="NCBI Taxonomy" id="349163"/>
    <lineage>
        <taxon>Bacteria</taxon>
        <taxon>Pseudomonadati</taxon>
        <taxon>Pseudomonadota</taxon>
        <taxon>Alphaproteobacteria</taxon>
        <taxon>Acetobacterales</taxon>
        <taxon>Acidocellaceae</taxon>
        <taxon>Acidiphilium</taxon>
    </lineage>
</organism>
<gene>
    <name evidence="1" type="primary">aspS</name>
    <name type="ordered locus">Acry_2364</name>
</gene>
<dbReference type="EC" id="6.1.1.23" evidence="1"/>
<dbReference type="EMBL" id="CP000697">
    <property type="protein sequence ID" value="ABQ31558.1"/>
    <property type="molecule type" value="Genomic_DNA"/>
</dbReference>
<dbReference type="RefSeq" id="WP_012040003.1">
    <property type="nucleotide sequence ID" value="NC_009484.1"/>
</dbReference>
<dbReference type="SMR" id="A5G126"/>
<dbReference type="STRING" id="349163.Acry_2364"/>
<dbReference type="KEGG" id="acr:Acry_2364"/>
<dbReference type="eggNOG" id="COG0173">
    <property type="taxonomic scope" value="Bacteria"/>
</dbReference>
<dbReference type="HOGENOM" id="CLU_014330_3_2_5"/>
<dbReference type="Proteomes" id="UP000000245">
    <property type="component" value="Chromosome"/>
</dbReference>
<dbReference type="GO" id="GO:0005737">
    <property type="term" value="C:cytoplasm"/>
    <property type="evidence" value="ECO:0007669"/>
    <property type="project" value="UniProtKB-SubCell"/>
</dbReference>
<dbReference type="GO" id="GO:0004815">
    <property type="term" value="F:aspartate-tRNA ligase activity"/>
    <property type="evidence" value="ECO:0007669"/>
    <property type="project" value="UniProtKB-UniRule"/>
</dbReference>
<dbReference type="GO" id="GO:0050560">
    <property type="term" value="F:aspartate-tRNA(Asn) ligase activity"/>
    <property type="evidence" value="ECO:0007669"/>
    <property type="project" value="UniProtKB-EC"/>
</dbReference>
<dbReference type="GO" id="GO:0005524">
    <property type="term" value="F:ATP binding"/>
    <property type="evidence" value="ECO:0007669"/>
    <property type="project" value="UniProtKB-UniRule"/>
</dbReference>
<dbReference type="GO" id="GO:0003676">
    <property type="term" value="F:nucleic acid binding"/>
    <property type="evidence" value="ECO:0007669"/>
    <property type="project" value="InterPro"/>
</dbReference>
<dbReference type="GO" id="GO:0006422">
    <property type="term" value="P:aspartyl-tRNA aminoacylation"/>
    <property type="evidence" value="ECO:0007669"/>
    <property type="project" value="UniProtKB-UniRule"/>
</dbReference>
<dbReference type="CDD" id="cd00777">
    <property type="entry name" value="AspRS_core"/>
    <property type="match status" value="1"/>
</dbReference>
<dbReference type="CDD" id="cd04317">
    <property type="entry name" value="EcAspRS_like_N"/>
    <property type="match status" value="1"/>
</dbReference>
<dbReference type="Gene3D" id="3.30.930.10">
    <property type="entry name" value="Bira Bifunctional Protein, Domain 2"/>
    <property type="match status" value="1"/>
</dbReference>
<dbReference type="Gene3D" id="3.30.1360.30">
    <property type="entry name" value="GAD-like domain"/>
    <property type="match status" value="1"/>
</dbReference>
<dbReference type="Gene3D" id="2.40.50.140">
    <property type="entry name" value="Nucleic acid-binding proteins"/>
    <property type="match status" value="1"/>
</dbReference>
<dbReference type="HAMAP" id="MF_00044">
    <property type="entry name" value="Asp_tRNA_synth_type1"/>
    <property type="match status" value="1"/>
</dbReference>
<dbReference type="InterPro" id="IPR004364">
    <property type="entry name" value="Aa-tRNA-synt_II"/>
</dbReference>
<dbReference type="InterPro" id="IPR006195">
    <property type="entry name" value="aa-tRNA-synth_II"/>
</dbReference>
<dbReference type="InterPro" id="IPR045864">
    <property type="entry name" value="aa-tRNA-synth_II/BPL/LPL"/>
</dbReference>
<dbReference type="InterPro" id="IPR004524">
    <property type="entry name" value="Asp-tRNA-ligase_1"/>
</dbReference>
<dbReference type="InterPro" id="IPR047089">
    <property type="entry name" value="Asp-tRNA-ligase_1_N"/>
</dbReference>
<dbReference type="InterPro" id="IPR002312">
    <property type="entry name" value="Asp/Asn-tRNA-synth_IIb"/>
</dbReference>
<dbReference type="InterPro" id="IPR047090">
    <property type="entry name" value="AspRS_core"/>
</dbReference>
<dbReference type="InterPro" id="IPR004115">
    <property type="entry name" value="GAD-like_sf"/>
</dbReference>
<dbReference type="InterPro" id="IPR029351">
    <property type="entry name" value="GAD_dom"/>
</dbReference>
<dbReference type="InterPro" id="IPR012340">
    <property type="entry name" value="NA-bd_OB-fold"/>
</dbReference>
<dbReference type="InterPro" id="IPR004365">
    <property type="entry name" value="NA-bd_OB_tRNA"/>
</dbReference>
<dbReference type="NCBIfam" id="TIGR00459">
    <property type="entry name" value="aspS_bact"/>
    <property type="match status" value="1"/>
</dbReference>
<dbReference type="NCBIfam" id="NF001750">
    <property type="entry name" value="PRK00476.1"/>
    <property type="match status" value="1"/>
</dbReference>
<dbReference type="PANTHER" id="PTHR22594:SF5">
    <property type="entry name" value="ASPARTATE--TRNA LIGASE, MITOCHONDRIAL"/>
    <property type="match status" value="1"/>
</dbReference>
<dbReference type="PANTHER" id="PTHR22594">
    <property type="entry name" value="ASPARTYL/LYSYL-TRNA SYNTHETASE"/>
    <property type="match status" value="1"/>
</dbReference>
<dbReference type="Pfam" id="PF02938">
    <property type="entry name" value="GAD"/>
    <property type="match status" value="1"/>
</dbReference>
<dbReference type="Pfam" id="PF00152">
    <property type="entry name" value="tRNA-synt_2"/>
    <property type="match status" value="1"/>
</dbReference>
<dbReference type="Pfam" id="PF01336">
    <property type="entry name" value="tRNA_anti-codon"/>
    <property type="match status" value="1"/>
</dbReference>
<dbReference type="PRINTS" id="PR01042">
    <property type="entry name" value="TRNASYNTHASP"/>
</dbReference>
<dbReference type="SUPFAM" id="SSF55681">
    <property type="entry name" value="Class II aaRS and biotin synthetases"/>
    <property type="match status" value="1"/>
</dbReference>
<dbReference type="SUPFAM" id="SSF55261">
    <property type="entry name" value="GAD domain-like"/>
    <property type="match status" value="1"/>
</dbReference>
<dbReference type="SUPFAM" id="SSF50249">
    <property type="entry name" value="Nucleic acid-binding proteins"/>
    <property type="match status" value="1"/>
</dbReference>
<dbReference type="PROSITE" id="PS50862">
    <property type="entry name" value="AA_TRNA_LIGASE_II"/>
    <property type="match status" value="1"/>
</dbReference>